<comment type="function">
    <text evidence="1">Protects against apoptosis mediated by Apaf-1.</text>
</comment>
<comment type="subunit">
    <text evidence="1">Binds Apaf-1, BCL-2 and BAD (Bcl-xl).</text>
</comment>
<comment type="subcellular location">
    <subcellularLocation>
        <location evidence="1">Endomembrane system</location>
        <topology evidence="1">Peripheral membrane protein</topology>
    </subcellularLocation>
    <text evidence="1">Associated with intracellular membranes.</text>
</comment>
<feature type="chain" id="PRO_0000064769" description="Cell death regulator Aven">
    <location>
        <begin position="1"/>
        <end position="342"/>
    </location>
</feature>
<feature type="region of interest" description="Disordered" evidence="2">
    <location>
        <begin position="1"/>
        <end position="130"/>
    </location>
</feature>
<feature type="region of interest" description="Disordered" evidence="2">
    <location>
        <begin position="228"/>
        <end position="257"/>
    </location>
</feature>
<feature type="region of interest" description="Disordered" evidence="2">
    <location>
        <begin position="279"/>
        <end position="342"/>
    </location>
</feature>
<feature type="compositionally biased region" description="Basic and acidic residues" evidence="2">
    <location>
        <begin position="15"/>
        <end position="26"/>
    </location>
</feature>
<feature type="compositionally biased region" description="Basic residues" evidence="2">
    <location>
        <begin position="44"/>
        <end position="55"/>
    </location>
</feature>
<feature type="compositionally biased region" description="Gly residues" evidence="2">
    <location>
        <begin position="56"/>
        <end position="74"/>
    </location>
</feature>
<feature type="compositionally biased region" description="Acidic residues" evidence="2">
    <location>
        <begin position="80"/>
        <end position="93"/>
    </location>
</feature>
<feature type="compositionally biased region" description="Basic and acidic residues" evidence="2">
    <location>
        <begin position="108"/>
        <end position="117"/>
    </location>
</feature>
<feature type="compositionally biased region" description="Polar residues" evidence="2">
    <location>
        <begin position="120"/>
        <end position="130"/>
    </location>
</feature>
<feature type="compositionally biased region" description="Basic and acidic residues" evidence="2">
    <location>
        <begin position="287"/>
        <end position="297"/>
    </location>
</feature>
<feature type="compositionally biased region" description="Acidic residues" evidence="2">
    <location>
        <begin position="330"/>
        <end position="342"/>
    </location>
</feature>
<feature type="modified residue" description="Phosphoserine" evidence="4">
    <location>
        <position position="82"/>
    </location>
</feature>
<feature type="modified residue" description="Phosphoserine" evidence="4">
    <location>
        <position position="84"/>
    </location>
</feature>
<feature type="sequence conflict" description="In Ref. 1; BAB24752." evidence="3" ref="1">
    <original>N</original>
    <variation>I</variation>
    <location>
        <position position="281"/>
    </location>
</feature>
<keyword id="KW-0053">Apoptosis</keyword>
<keyword id="KW-0472">Membrane</keyword>
<keyword id="KW-0597">Phosphoprotein</keyword>
<keyword id="KW-1185">Reference proteome</keyword>
<evidence type="ECO:0000250" key="1"/>
<evidence type="ECO:0000256" key="2">
    <source>
        <dbReference type="SAM" id="MobiDB-lite"/>
    </source>
</evidence>
<evidence type="ECO:0000305" key="3"/>
<evidence type="ECO:0007744" key="4">
    <source>
    </source>
</evidence>
<protein>
    <recommendedName>
        <fullName>Cell death regulator Aven</fullName>
    </recommendedName>
</protein>
<accession>Q9D9K3</accession>
<accession>A2AGL4</accession>
<gene>
    <name type="primary">Aven</name>
</gene>
<dbReference type="EMBL" id="AK006808">
    <property type="protein sequence ID" value="BAB24752.1"/>
    <property type="molecule type" value="mRNA"/>
</dbReference>
<dbReference type="EMBL" id="AL691423">
    <property type="status" value="NOT_ANNOTATED_CDS"/>
    <property type="molecule type" value="Genomic_DNA"/>
</dbReference>
<dbReference type="EMBL" id="AL731840">
    <property type="status" value="NOT_ANNOTATED_CDS"/>
    <property type="molecule type" value="Genomic_DNA"/>
</dbReference>
<dbReference type="EMBL" id="CH466519">
    <property type="protein sequence ID" value="EDL27845.1"/>
    <property type="molecule type" value="Genomic_DNA"/>
</dbReference>
<dbReference type="CCDS" id="CCDS16557.1"/>
<dbReference type="RefSeq" id="NP_083120.2">
    <property type="nucleotide sequence ID" value="NM_028844.4"/>
</dbReference>
<dbReference type="BioGRID" id="216619">
    <property type="interactions" value="1"/>
</dbReference>
<dbReference type="FunCoup" id="Q9D9K3">
    <property type="interactions" value="675"/>
</dbReference>
<dbReference type="STRING" id="10090.ENSMUSP00000003705"/>
<dbReference type="GlyGen" id="Q9D9K3">
    <property type="glycosylation" value="1 site"/>
</dbReference>
<dbReference type="iPTMnet" id="Q9D9K3"/>
<dbReference type="PhosphoSitePlus" id="Q9D9K3"/>
<dbReference type="SwissPalm" id="Q9D9K3"/>
<dbReference type="jPOST" id="Q9D9K3"/>
<dbReference type="PaxDb" id="10090-ENSMUSP00000003705"/>
<dbReference type="ProteomicsDB" id="273506"/>
<dbReference type="Pumba" id="Q9D9K3"/>
<dbReference type="Antibodypedia" id="9528">
    <property type="antibodies" value="352 antibodies from 32 providers"/>
</dbReference>
<dbReference type="DNASU" id="74268"/>
<dbReference type="Ensembl" id="ENSMUST00000003705.12">
    <property type="protein sequence ID" value="ENSMUSP00000003705.6"/>
    <property type="gene ID" value="ENSMUSG00000003604.15"/>
</dbReference>
<dbReference type="GeneID" id="74268"/>
<dbReference type="KEGG" id="mmu:74268"/>
<dbReference type="UCSC" id="uc008lpe.2">
    <property type="organism name" value="mouse"/>
</dbReference>
<dbReference type="AGR" id="MGI:1921518"/>
<dbReference type="CTD" id="57099"/>
<dbReference type="MGI" id="MGI:1921518">
    <property type="gene designation" value="Aven"/>
</dbReference>
<dbReference type="VEuPathDB" id="HostDB:ENSMUSG00000003604"/>
<dbReference type="eggNOG" id="ENOG502S0YI">
    <property type="taxonomic scope" value="Eukaryota"/>
</dbReference>
<dbReference type="GeneTree" id="ENSGT00390000003299"/>
<dbReference type="HOGENOM" id="CLU_074829_0_0_1"/>
<dbReference type="InParanoid" id="Q9D9K3"/>
<dbReference type="OMA" id="FTHFRFA"/>
<dbReference type="OrthoDB" id="6338233at2759"/>
<dbReference type="PhylomeDB" id="Q9D9K3"/>
<dbReference type="TreeFam" id="TF332067"/>
<dbReference type="Reactome" id="R-MMU-111458">
    <property type="pathway name" value="Formation of apoptosome"/>
</dbReference>
<dbReference type="Reactome" id="R-MMU-9627069">
    <property type="pathway name" value="Regulation of the apoptosome activity"/>
</dbReference>
<dbReference type="BioGRID-ORCS" id="74268">
    <property type="hits" value="1 hit in 45 CRISPR screens"/>
</dbReference>
<dbReference type="ChiTaRS" id="Aven">
    <property type="organism name" value="mouse"/>
</dbReference>
<dbReference type="PRO" id="PR:Q9D9K3"/>
<dbReference type="Proteomes" id="UP000000589">
    <property type="component" value="Chromosome 2"/>
</dbReference>
<dbReference type="RNAct" id="Q9D9K3">
    <property type="molecule type" value="protein"/>
</dbReference>
<dbReference type="Bgee" id="ENSMUSG00000003604">
    <property type="expression patterns" value="Expressed in seminiferous tubule of testis and 198 other cell types or tissues"/>
</dbReference>
<dbReference type="ExpressionAtlas" id="Q9D9K3">
    <property type="expression patterns" value="baseline and differential"/>
</dbReference>
<dbReference type="GO" id="GO:0012505">
    <property type="term" value="C:endomembrane system"/>
    <property type="evidence" value="ECO:0007669"/>
    <property type="project" value="UniProtKB-SubCell"/>
</dbReference>
<dbReference type="GO" id="GO:0016020">
    <property type="term" value="C:membrane"/>
    <property type="evidence" value="ECO:0000250"/>
    <property type="project" value="UniProtKB"/>
</dbReference>
<dbReference type="GO" id="GO:0006915">
    <property type="term" value="P:apoptotic process"/>
    <property type="evidence" value="ECO:0007669"/>
    <property type="project" value="UniProtKB-KW"/>
</dbReference>
<dbReference type="GO" id="GO:0043066">
    <property type="term" value="P:negative regulation of apoptotic process"/>
    <property type="evidence" value="ECO:0000250"/>
    <property type="project" value="UniProtKB"/>
</dbReference>
<dbReference type="InterPro" id="IPR026187">
    <property type="entry name" value="Aven"/>
</dbReference>
<dbReference type="PANTHER" id="PTHR16524">
    <property type="entry name" value="CELL DEATH REGULATOR AVEN"/>
    <property type="match status" value="1"/>
</dbReference>
<dbReference type="PANTHER" id="PTHR16524:SF2">
    <property type="entry name" value="CELL DEATH REGULATOR AVEN"/>
    <property type="match status" value="1"/>
</dbReference>
<reference key="1">
    <citation type="journal article" date="2005" name="Science">
        <title>The transcriptional landscape of the mammalian genome.</title>
        <authorList>
            <person name="Carninci P."/>
            <person name="Kasukawa T."/>
            <person name="Katayama S."/>
            <person name="Gough J."/>
            <person name="Frith M.C."/>
            <person name="Maeda N."/>
            <person name="Oyama R."/>
            <person name="Ravasi T."/>
            <person name="Lenhard B."/>
            <person name="Wells C."/>
            <person name="Kodzius R."/>
            <person name="Shimokawa K."/>
            <person name="Bajic V.B."/>
            <person name="Brenner S.E."/>
            <person name="Batalov S."/>
            <person name="Forrest A.R."/>
            <person name="Zavolan M."/>
            <person name="Davis M.J."/>
            <person name="Wilming L.G."/>
            <person name="Aidinis V."/>
            <person name="Allen J.E."/>
            <person name="Ambesi-Impiombato A."/>
            <person name="Apweiler R."/>
            <person name="Aturaliya R.N."/>
            <person name="Bailey T.L."/>
            <person name="Bansal M."/>
            <person name="Baxter L."/>
            <person name="Beisel K.W."/>
            <person name="Bersano T."/>
            <person name="Bono H."/>
            <person name="Chalk A.M."/>
            <person name="Chiu K.P."/>
            <person name="Choudhary V."/>
            <person name="Christoffels A."/>
            <person name="Clutterbuck D.R."/>
            <person name="Crowe M.L."/>
            <person name="Dalla E."/>
            <person name="Dalrymple B.P."/>
            <person name="de Bono B."/>
            <person name="Della Gatta G."/>
            <person name="di Bernardo D."/>
            <person name="Down T."/>
            <person name="Engstrom P."/>
            <person name="Fagiolini M."/>
            <person name="Faulkner G."/>
            <person name="Fletcher C.F."/>
            <person name="Fukushima T."/>
            <person name="Furuno M."/>
            <person name="Futaki S."/>
            <person name="Gariboldi M."/>
            <person name="Georgii-Hemming P."/>
            <person name="Gingeras T.R."/>
            <person name="Gojobori T."/>
            <person name="Green R.E."/>
            <person name="Gustincich S."/>
            <person name="Harbers M."/>
            <person name="Hayashi Y."/>
            <person name="Hensch T.K."/>
            <person name="Hirokawa N."/>
            <person name="Hill D."/>
            <person name="Huminiecki L."/>
            <person name="Iacono M."/>
            <person name="Ikeo K."/>
            <person name="Iwama A."/>
            <person name="Ishikawa T."/>
            <person name="Jakt M."/>
            <person name="Kanapin A."/>
            <person name="Katoh M."/>
            <person name="Kawasawa Y."/>
            <person name="Kelso J."/>
            <person name="Kitamura H."/>
            <person name="Kitano H."/>
            <person name="Kollias G."/>
            <person name="Krishnan S.P."/>
            <person name="Kruger A."/>
            <person name="Kummerfeld S.K."/>
            <person name="Kurochkin I.V."/>
            <person name="Lareau L.F."/>
            <person name="Lazarevic D."/>
            <person name="Lipovich L."/>
            <person name="Liu J."/>
            <person name="Liuni S."/>
            <person name="McWilliam S."/>
            <person name="Madan Babu M."/>
            <person name="Madera M."/>
            <person name="Marchionni L."/>
            <person name="Matsuda H."/>
            <person name="Matsuzawa S."/>
            <person name="Miki H."/>
            <person name="Mignone F."/>
            <person name="Miyake S."/>
            <person name="Morris K."/>
            <person name="Mottagui-Tabar S."/>
            <person name="Mulder N."/>
            <person name="Nakano N."/>
            <person name="Nakauchi H."/>
            <person name="Ng P."/>
            <person name="Nilsson R."/>
            <person name="Nishiguchi S."/>
            <person name="Nishikawa S."/>
            <person name="Nori F."/>
            <person name="Ohara O."/>
            <person name="Okazaki Y."/>
            <person name="Orlando V."/>
            <person name="Pang K.C."/>
            <person name="Pavan W.J."/>
            <person name="Pavesi G."/>
            <person name="Pesole G."/>
            <person name="Petrovsky N."/>
            <person name="Piazza S."/>
            <person name="Reed J."/>
            <person name="Reid J.F."/>
            <person name="Ring B.Z."/>
            <person name="Ringwald M."/>
            <person name="Rost B."/>
            <person name="Ruan Y."/>
            <person name="Salzberg S.L."/>
            <person name="Sandelin A."/>
            <person name="Schneider C."/>
            <person name="Schoenbach C."/>
            <person name="Sekiguchi K."/>
            <person name="Semple C.A."/>
            <person name="Seno S."/>
            <person name="Sessa L."/>
            <person name="Sheng Y."/>
            <person name="Shibata Y."/>
            <person name="Shimada H."/>
            <person name="Shimada K."/>
            <person name="Silva D."/>
            <person name="Sinclair B."/>
            <person name="Sperling S."/>
            <person name="Stupka E."/>
            <person name="Sugiura K."/>
            <person name="Sultana R."/>
            <person name="Takenaka Y."/>
            <person name="Taki K."/>
            <person name="Tammoja K."/>
            <person name="Tan S.L."/>
            <person name="Tang S."/>
            <person name="Taylor M.S."/>
            <person name="Tegner J."/>
            <person name="Teichmann S.A."/>
            <person name="Ueda H.R."/>
            <person name="van Nimwegen E."/>
            <person name="Verardo R."/>
            <person name="Wei C.L."/>
            <person name="Yagi K."/>
            <person name="Yamanishi H."/>
            <person name="Zabarovsky E."/>
            <person name="Zhu S."/>
            <person name="Zimmer A."/>
            <person name="Hide W."/>
            <person name="Bult C."/>
            <person name="Grimmond S.M."/>
            <person name="Teasdale R.D."/>
            <person name="Liu E.T."/>
            <person name="Brusic V."/>
            <person name="Quackenbush J."/>
            <person name="Wahlestedt C."/>
            <person name="Mattick J.S."/>
            <person name="Hume D.A."/>
            <person name="Kai C."/>
            <person name="Sasaki D."/>
            <person name="Tomaru Y."/>
            <person name="Fukuda S."/>
            <person name="Kanamori-Katayama M."/>
            <person name="Suzuki M."/>
            <person name="Aoki J."/>
            <person name="Arakawa T."/>
            <person name="Iida J."/>
            <person name="Imamura K."/>
            <person name="Itoh M."/>
            <person name="Kato T."/>
            <person name="Kawaji H."/>
            <person name="Kawagashira N."/>
            <person name="Kawashima T."/>
            <person name="Kojima M."/>
            <person name="Kondo S."/>
            <person name="Konno H."/>
            <person name="Nakano K."/>
            <person name="Ninomiya N."/>
            <person name="Nishio T."/>
            <person name="Okada M."/>
            <person name="Plessy C."/>
            <person name="Shibata K."/>
            <person name="Shiraki T."/>
            <person name="Suzuki S."/>
            <person name="Tagami M."/>
            <person name="Waki K."/>
            <person name="Watahiki A."/>
            <person name="Okamura-Oho Y."/>
            <person name="Suzuki H."/>
            <person name="Kawai J."/>
            <person name="Hayashizaki Y."/>
        </authorList>
    </citation>
    <scope>NUCLEOTIDE SEQUENCE [LARGE SCALE MRNA]</scope>
    <source>
        <strain>C57BL/6J</strain>
        <tissue>Testis</tissue>
    </source>
</reference>
<reference key="2">
    <citation type="journal article" date="2009" name="PLoS Biol.">
        <title>Lineage-specific biology revealed by a finished genome assembly of the mouse.</title>
        <authorList>
            <person name="Church D.M."/>
            <person name="Goodstadt L."/>
            <person name="Hillier L.W."/>
            <person name="Zody M.C."/>
            <person name="Goldstein S."/>
            <person name="She X."/>
            <person name="Bult C.J."/>
            <person name="Agarwala R."/>
            <person name="Cherry J.L."/>
            <person name="DiCuccio M."/>
            <person name="Hlavina W."/>
            <person name="Kapustin Y."/>
            <person name="Meric P."/>
            <person name="Maglott D."/>
            <person name="Birtle Z."/>
            <person name="Marques A.C."/>
            <person name="Graves T."/>
            <person name="Zhou S."/>
            <person name="Teague B."/>
            <person name="Potamousis K."/>
            <person name="Churas C."/>
            <person name="Place M."/>
            <person name="Herschleb J."/>
            <person name="Runnheim R."/>
            <person name="Forrest D."/>
            <person name="Amos-Landgraf J."/>
            <person name="Schwartz D.C."/>
            <person name="Cheng Z."/>
            <person name="Lindblad-Toh K."/>
            <person name="Eichler E.E."/>
            <person name="Ponting C.P."/>
        </authorList>
    </citation>
    <scope>NUCLEOTIDE SEQUENCE [LARGE SCALE GENOMIC DNA]</scope>
    <source>
        <strain>C57BL/6J</strain>
    </source>
</reference>
<reference key="3">
    <citation type="submission" date="2005-07" db="EMBL/GenBank/DDBJ databases">
        <authorList>
            <person name="Mural R.J."/>
            <person name="Adams M.D."/>
            <person name="Myers E.W."/>
            <person name="Smith H.O."/>
            <person name="Venter J.C."/>
        </authorList>
    </citation>
    <scope>NUCLEOTIDE SEQUENCE [LARGE SCALE GENOMIC DNA]</scope>
</reference>
<reference key="4">
    <citation type="journal article" date="2004" name="Mol. Cell. Proteomics">
        <title>Phosphoproteomic analysis of the developing mouse brain.</title>
        <authorList>
            <person name="Ballif B.A."/>
            <person name="Villen J."/>
            <person name="Beausoleil S.A."/>
            <person name="Schwartz D."/>
            <person name="Gygi S.P."/>
        </authorList>
    </citation>
    <scope>IDENTIFICATION BY MASS SPECTROMETRY [LARGE SCALE ANALYSIS]</scope>
    <source>
        <tissue>Embryonic brain</tissue>
    </source>
</reference>
<reference key="5">
    <citation type="journal article" date="2010" name="Cell">
        <title>A tissue-specific atlas of mouse protein phosphorylation and expression.</title>
        <authorList>
            <person name="Huttlin E.L."/>
            <person name="Jedrychowski M.P."/>
            <person name="Elias J.E."/>
            <person name="Goswami T."/>
            <person name="Rad R."/>
            <person name="Beausoleil S.A."/>
            <person name="Villen J."/>
            <person name="Haas W."/>
            <person name="Sowa M.E."/>
            <person name="Gygi S.P."/>
        </authorList>
    </citation>
    <scope>PHOSPHORYLATION [LARGE SCALE ANALYSIS] AT SER-82 AND SER-84</scope>
    <scope>IDENTIFICATION BY MASS SPECTROMETRY [LARGE SCALE ANALYSIS]</scope>
    <source>
        <tissue>Brown adipose tissue</tissue>
        <tissue>Liver</tissue>
        <tissue>Pancreas</tissue>
        <tissue>Spleen</tissue>
        <tissue>Testis</tissue>
    </source>
</reference>
<name>AVEN_MOUSE</name>
<organism>
    <name type="scientific">Mus musculus</name>
    <name type="common">Mouse</name>
    <dbReference type="NCBI Taxonomy" id="10090"/>
    <lineage>
        <taxon>Eukaryota</taxon>
        <taxon>Metazoa</taxon>
        <taxon>Chordata</taxon>
        <taxon>Craniata</taxon>
        <taxon>Vertebrata</taxon>
        <taxon>Euteleostomi</taxon>
        <taxon>Mammalia</taxon>
        <taxon>Eutheria</taxon>
        <taxon>Euarchontoglires</taxon>
        <taxon>Glires</taxon>
        <taxon>Rodentia</taxon>
        <taxon>Myomorpha</taxon>
        <taxon>Muroidea</taxon>
        <taxon>Muridae</taxon>
        <taxon>Murinae</taxon>
        <taxon>Mus</taxon>
        <taxon>Mus</taxon>
    </lineage>
</organism>
<proteinExistence type="evidence at protein level"/>
<sequence>MQAERGARGGRGRRGGRERPGGDREPVGAATALARGGCGDGGGRRGRGRGFRRGRGGGGLRGGRWEPGGRGGGASTRVEEDSDSETYGEENDEQGNFSRRKIVSNWDRYQDTEKEVNGESGESQRGTDFSVLLSSAGDSFSQFRFAEEKEWDGETSCPKQNSALYVDSESLVRALEQLPLAVRLNVASELIQTTIPLELPQVKPRRNDDGKELGMHLRGPISELRSAAGACPRSLGRGSLRQSPLEGLQKAPTPTQSVADHLEEELDMLLHLDAPVQEEGNISPDQTSRDQEPEKDGQVAQEETGPEKPSVTREKNVEPEQPSTSKNVTEEELEDWLDSMIS</sequence>